<gene>
    <name evidence="2" type="primary">CBLL1</name>
    <name evidence="2" type="synonym">HAKAI</name>
    <name evidence="5" type="ORF">RCJMB04_31p12</name>
</gene>
<comment type="function">
    <text evidence="1 2">E3 ubiquitin-protein ligase that mediates ubiquitination of several tyrosine-phosphorylated Src substrates. Associated component of the WMM complex, a complex that mediates N6-methyladenosine (m6A) methylation of RNAs, a modification that plays a role in the efficiency of mRNA splicing and RNA processing.</text>
</comment>
<comment type="catalytic activity">
    <reaction evidence="2">
        <text>S-ubiquitinyl-[E2 ubiquitin-conjugating enzyme]-L-cysteine + [acceptor protein]-L-lysine = [E2 ubiquitin-conjugating enzyme]-L-cysteine + N(6)-ubiquitinyl-[acceptor protein]-L-lysine.</text>
        <dbReference type="EC" id="2.3.2.27"/>
    </reaction>
</comment>
<comment type="pathway">
    <text evidence="2">Protein modification; protein ubiquitination.</text>
</comment>
<comment type="subunit">
    <text evidence="1 2">Homodimer (By similarity). Interacts with tyrosine-phosphorylated SRC substrates (By similarity). Component of the WMM complex, a N6-methyltransferase complex composed of a catalytic subcomplex, named MAC, and of an associated subcomplex, named MACOM. Component of the MACOM subcomplex (By similarity).</text>
</comment>
<comment type="subcellular location">
    <subcellularLocation>
        <location evidence="1">Nucleus speckle</location>
    </subcellularLocation>
    <subcellularLocation>
        <location evidence="1">Nucleus</location>
        <location evidence="1">Nucleoplasm</location>
    </subcellularLocation>
</comment>
<comment type="domain">
    <text evidence="2">The HYB domain forms a phosphotyrosine-binding pocket upon dimerization, and mediates as well the recognition of its flanking acidic amino acids.</text>
</comment>
<comment type="similarity">
    <text evidence="6">Belongs to the Hakai family.</text>
</comment>
<keyword id="KW-0217">Developmental protein</keyword>
<keyword id="KW-0479">Metal-binding</keyword>
<keyword id="KW-0539">Nucleus</keyword>
<keyword id="KW-1185">Reference proteome</keyword>
<keyword id="KW-0808">Transferase</keyword>
<keyword id="KW-0833">Ubl conjugation pathway</keyword>
<keyword id="KW-0862">Zinc</keyword>
<keyword id="KW-0863">Zinc-finger</keyword>
<organism>
    <name type="scientific">Gallus gallus</name>
    <name type="common">Chicken</name>
    <dbReference type="NCBI Taxonomy" id="9031"/>
    <lineage>
        <taxon>Eukaryota</taxon>
        <taxon>Metazoa</taxon>
        <taxon>Chordata</taxon>
        <taxon>Craniata</taxon>
        <taxon>Vertebrata</taxon>
        <taxon>Euteleostomi</taxon>
        <taxon>Archelosauria</taxon>
        <taxon>Archosauria</taxon>
        <taxon>Dinosauria</taxon>
        <taxon>Saurischia</taxon>
        <taxon>Theropoda</taxon>
        <taxon>Coelurosauria</taxon>
        <taxon>Aves</taxon>
        <taxon>Neognathae</taxon>
        <taxon>Galloanserae</taxon>
        <taxon>Galliformes</taxon>
        <taxon>Phasianidae</taxon>
        <taxon>Phasianinae</taxon>
        <taxon>Gallus</taxon>
    </lineage>
</organism>
<reference key="1">
    <citation type="journal article" date="2005" name="Genome Biol.">
        <title>Full-length cDNAs from chicken bursal lymphocytes to facilitate gene function analysis.</title>
        <authorList>
            <person name="Caldwell R.B."/>
            <person name="Kierzek A.M."/>
            <person name="Arakawa H."/>
            <person name="Bezzubov Y."/>
            <person name="Zaim J."/>
            <person name="Fiedler P."/>
            <person name="Kutter S."/>
            <person name="Blagodatski A."/>
            <person name="Kostovska D."/>
            <person name="Koter M."/>
            <person name="Plachy J."/>
            <person name="Carninci P."/>
            <person name="Hayashizaki Y."/>
            <person name="Buerstedde J.-M."/>
        </authorList>
    </citation>
    <scope>NUCLEOTIDE SEQUENCE [LARGE SCALE MRNA]</scope>
    <source>
        <strain>CB</strain>
        <tissue>Bursa of Fabricius</tissue>
    </source>
</reference>
<name>HAKAI_CHICK</name>
<evidence type="ECO:0000250" key="1">
    <source>
        <dbReference type="UniProtKB" id="Q75N03"/>
    </source>
</evidence>
<evidence type="ECO:0000250" key="2">
    <source>
        <dbReference type="UniProtKB" id="Q9JIY2"/>
    </source>
</evidence>
<evidence type="ECO:0000255" key="3">
    <source>
        <dbReference type="PROSITE-ProRule" id="PRU00175"/>
    </source>
</evidence>
<evidence type="ECO:0000256" key="4">
    <source>
        <dbReference type="SAM" id="MobiDB-lite"/>
    </source>
</evidence>
<evidence type="ECO:0000303" key="5">
    <source>
    </source>
</evidence>
<evidence type="ECO:0000305" key="6"/>
<feature type="chain" id="PRO_0000284051" description="E3 ubiquitin-protein ligase Hakai">
    <location>
        <begin position="1"/>
        <end position="493"/>
    </location>
</feature>
<feature type="zinc finger region" description="RING-type" evidence="3">
    <location>
        <begin position="109"/>
        <end position="149"/>
    </location>
</feature>
<feature type="zinc finger region" description="C2H2-type">
    <location>
        <begin position="164"/>
        <end position="190"/>
    </location>
</feature>
<feature type="region of interest" description="Disordered" evidence="4">
    <location>
        <begin position="1"/>
        <end position="20"/>
    </location>
</feature>
<feature type="region of interest" description="Disordered" evidence="4">
    <location>
        <begin position="28"/>
        <end position="61"/>
    </location>
</feature>
<feature type="region of interest" description="HYB domain" evidence="2">
    <location>
        <begin position="148"/>
        <end position="206"/>
    </location>
</feature>
<feature type="region of interest" description="Disordered" evidence="4">
    <location>
        <begin position="253"/>
        <end position="493"/>
    </location>
</feature>
<feature type="compositionally biased region" description="Polar residues" evidence="4">
    <location>
        <begin position="7"/>
        <end position="16"/>
    </location>
</feature>
<feature type="compositionally biased region" description="Pro residues" evidence="4">
    <location>
        <begin position="262"/>
        <end position="276"/>
    </location>
</feature>
<feature type="compositionally biased region" description="Pro residues" evidence="4">
    <location>
        <begin position="342"/>
        <end position="352"/>
    </location>
</feature>
<feature type="compositionally biased region" description="Pro residues" evidence="4">
    <location>
        <begin position="372"/>
        <end position="389"/>
    </location>
</feature>
<feature type="compositionally biased region" description="Pro residues" evidence="4">
    <location>
        <begin position="399"/>
        <end position="412"/>
    </location>
</feature>
<feature type="compositionally biased region" description="Polar residues" evidence="4">
    <location>
        <begin position="427"/>
        <end position="444"/>
    </location>
</feature>
<feature type="compositionally biased region" description="Pro residues" evidence="4">
    <location>
        <begin position="459"/>
        <end position="469"/>
    </location>
</feature>
<feature type="compositionally biased region" description="Low complexity" evidence="4">
    <location>
        <begin position="470"/>
        <end position="480"/>
    </location>
</feature>
<protein>
    <recommendedName>
        <fullName evidence="6">E3 ubiquitin-protein ligase Hakai</fullName>
        <ecNumber evidence="2">2.3.2.27</ecNumber>
    </recommendedName>
    <alternativeName>
        <fullName evidence="2">Casitas B-lineage lymphoma-transforming sequence-like protein 1</fullName>
        <shortName evidence="2">c-Cbl-like protein 1</shortName>
    </alternativeName>
    <alternativeName>
        <fullName evidence="6">RING-type E3 ubiquitin transferase Hakai</fullName>
    </alternativeName>
</protein>
<sequence length="493" mass="54851">MDHNDNDLQGTNSSASLGGLDVRRRIPIKLISKQTNKTKPAPRAPRAMNRMPAKTQAGDEEEFDFNEEERYECKGGEMFGNQRRFPGPIFWDYKINLLGEKDDTPVHFCDKCGLPIKMYGRMIPCKHVFCYDCAILHEKKGDKMCPGCNEPVQRIEQCVRGSLFMCSIVQGCKRTYLSQRDLQAHINHRHMRAGKPVTRPPLEPVHPPIAPPPAEIPERFIMPPEKHHMSHIPPKQHIMMPPPPLQHVPHEHYNQPHEDIRPPPAEMSMAPPPPRPVSQDTFRISTRKHSNLITVPIQDDSNSGAREPPPPAPAPAHHHPEYQGQPVVTHPHHIMPPQQHYAPPPPPPPPISHPLQHPPQAAGTPHMVYSQAPPPPMTSAPPPITPPPGHIIAQMPPYMNHPPPGPPPPQHGGPPVNVSAPPPHHYNPNSLPQFSEDQGTLSPPFTQPGGMSPGIWPAPRGPPPPPRMQGPPAQAPLAGPHHPDQARYRPYYQ</sequence>
<proteinExistence type="evidence at transcript level"/>
<accession>Q5ZHZ4</accession>
<dbReference type="EC" id="2.3.2.27" evidence="2"/>
<dbReference type="EMBL" id="AJ720990">
    <property type="protein sequence ID" value="CAG32649.1"/>
    <property type="molecule type" value="mRNA"/>
</dbReference>
<dbReference type="RefSeq" id="NP_001007849.1">
    <property type="nucleotide sequence ID" value="NM_001007848.2"/>
</dbReference>
<dbReference type="SMR" id="Q5ZHZ4"/>
<dbReference type="FunCoup" id="Q5ZHZ4">
    <property type="interactions" value="2197"/>
</dbReference>
<dbReference type="STRING" id="9031.ENSGALP00000052986"/>
<dbReference type="GlyGen" id="Q5ZHZ4">
    <property type="glycosylation" value="1 site"/>
</dbReference>
<dbReference type="PaxDb" id="9031-ENSGALP00000041156"/>
<dbReference type="GeneID" id="417701"/>
<dbReference type="KEGG" id="gga:417701"/>
<dbReference type="CTD" id="79872"/>
<dbReference type="VEuPathDB" id="HostDB:geneid_417701"/>
<dbReference type="eggNOG" id="KOG2932">
    <property type="taxonomic scope" value="Eukaryota"/>
</dbReference>
<dbReference type="InParanoid" id="Q5ZHZ4"/>
<dbReference type="OMA" id="HLPPKQH"/>
<dbReference type="OrthoDB" id="547746at2759"/>
<dbReference type="PhylomeDB" id="Q5ZHZ4"/>
<dbReference type="TreeFam" id="TF332910"/>
<dbReference type="UniPathway" id="UPA00143"/>
<dbReference type="PRO" id="PR:Q5ZHZ4"/>
<dbReference type="Proteomes" id="UP000000539">
    <property type="component" value="Unassembled WGS sequence"/>
</dbReference>
<dbReference type="GO" id="GO:0005737">
    <property type="term" value="C:cytoplasm"/>
    <property type="evidence" value="ECO:0000250"/>
    <property type="project" value="UniProtKB"/>
</dbReference>
<dbReference type="GO" id="GO:0016607">
    <property type="term" value="C:nuclear speck"/>
    <property type="evidence" value="ECO:0007669"/>
    <property type="project" value="UniProtKB-SubCell"/>
</dbReference>
<dbReference type="GO" id="GO:0005634">
    <property type="term" value="C:nucleus"/>
    <property type="evidence" value="ECO:0000250"/>
    <property type="project" value="UniProtKB"/>
</dbReference>
<dbReference type="GO" id="GO:0036396">
    <property type="term" value="C:RNA N6-methyladenosine methyltransferase complex"/>
    <property type="evidence" value="ECO:0000250"/>
    <property type="project" value="UniProtKB"/>
</dbReference>
<dbReference type="GO" id="GO:0061630">
    <property type="term" value="F:ubiquitin protein ligase activity"/>
    <property type="evidence" value="ECO:0000318"/>
    <property type="project" value="GO_Central"/>
</dbReference>
<dbReference type="GO" id="GO:0004842">
    <property type="term" value="F:ubiquitin-protein transferase activity"/>
    <property type="evidence" value="ECO:0000250"/>
    <property type="project" value="UniProtKB"/>
</dbReference>
<dbReference type="GO" id="GO:0008270">
    <property type="term" value="F:zinc ion binding"/>
    <property type="evidence" value="ECO:0007669"/>
    <property type="project" value="UniProtKB-KW"/>
</dbReference>
<dbReference type="GO" id="GO:0006397">
    <property type="term" value="P:mRNA processing"/>
    <property type="evidence" value="ECO:0000250"/>
    <property type="project" value="UniProtKB"/>
</dbReference>
<dbReference type="GO" id="GO:0007162">
    <property type="term" value="P:negative regulation of cell adhesion"/>
    <property type="evidence" value="ECO:0000250"/>
    <property type="project" value="UniProtKB"/>
</dbReference>
<dbReference type="GO" id="GO:0030335">
    <property type="term" value="P:positive regulation of cell migration"/>
    <property type="evidence" value="ECO:0000250"/>
    <property type="project" value="UniProtKB"/>
</dbReference>
<dbReference type="GO" id="GO:0045807">
    <property type="term" value="P:positive regulation of endocytosis"/>
    <property type="evidence" value="ECO:0000250"/>
    <property type="project" value="UniProtKB"/>
</dbReference>
<dbReference type="GO" id="GO:0016567">
    <property type="term" value="P:protein ubiquitination"/>
    <property type="evidence" value="ECO:0000318"/>
    <property type="project" value="GO_Central"/>
</dbReference>
<dbReference type="GO" id="GO:0030155">
    <property type="term" value="P:regulation of cell adhesion"/>
    <property type="evidence" value="ECO:0000318"/>
    <property type="project" value="GO_Central"/>
</dbReference>
<dbReference type="CDD" id="cd16508">
    <property type="entry name" value="RING-HC_HAKAI-like"/>
    <property type="match status" value="1"/>
</dbReference>
<dbReference type="FunFam" id="3.30.40.10:FF:000140">
    <property type="entry name" value="E3 ubiquitin-protein ligase Hakai isoform X2"/>
    <property type="match status" value="1"/>
</dbReference>
<dbReference type="FunFam" id="6.10.140.2210:FF:000001">
    <property type="entry name" value="Putative e3 ubiquitin-protein ligase hakai"/>
    <property type="match status" value="1"/>
</dbReference>
<dbReference type="Gene3D" id="6.10.140.2210">
    <property type="match status" value="1"/>
</dbReference>
<dbReference type="Gene3D" id="3.30.40.10">
    <property type="entry name" value="Zinc/RING finger domain, C3HC4 (zinc finger)"/>
    <property type="match status" value="1"/>
</dbReference>
<dbReference type="InterPro" id="IPR040380">
    <property type="entry name" value="HAKAI-like_RING-HC"/>
</dbReference>
<dbReference type="InterPro" id="IPR040383">
    <property type="entry name" value="HAKAI/CBLL2"/>
</dbReference>
<dbReference type="InterPro" id="IPR041042">
    <property type="entry name" value="Znf_Hakai"/>
</dbReference>
<dbReference type="InterPro" id="IPR001841">
    <property type="entry name" value="Znf_RING"/>
</dbReference>
<dbReference type="InterPro" id="IPR013083">
    <property type="entry name" value="Znf_RING/FYVE/PHD"/>
</dbReference>
<dbReference type="InterPro" id="IPR017907">
    <property type="entry name" value="Znf_RING_CS"/>
</dbReference>
<dbReference type="PANTHER" id="PTHR13480:SF0">
    <property type="entry name" value="E3 UBIQUITIN-PROTEIN LIGASE HAKAI"/>
    <property type="match status" value="1"/>
</dbReference>
<dbReference type="PANTHER" id="PTHR13480">
    <property type="entry name" value="E3 UBIQUITIN-PROTEIN LIGASE HAKAI-RELATED"/>
    <property type="match status" value="1"/>
</dbReference>
<dbReference type="Pfam" id="PF18408">
    <property type="entry name" value="zf_Hakai"/>
    <property type="match status" value="1"/>
</dbReference>
<dbReference type="SUPFAM" id="SSF57850">
    <property type="entry name" value="RING/U-box"/>
    <property type="match status" value="1"/>
</dbReference>
<dbReference type="PROSITE" id="PS00518">
    <property type="entry name" value="ZF_RING_1"/>
    <property type="match status" value="1"/>
</dbReference>
<dbReference type="PROSITE" id="PS50089">
    <property type="entry name" value="ZF_RING_2"/>
    <property type="match status" value="1"/>
</dbReference>